<organism>
    <name type="scientific">Methanoregula boonei (strain DSM 21154 / JCM 14090 / 6A8)</name>
    <dbReference type="NCBI Taxonomy" id="456442"/>
    <lineage>
        <taxon>Archaea</taxon>
        <taxon>Methanobacteriati</taxon>
        <taxon>Methanobacteriota</taxon>
        <taxon>Stenosarchaea group</taxon>
        <taxon>Methanomicrobia</taxon>
        <taxon>Methanomicrobiales</taxon>
        <taxon>Methanoregulaceae</taxon>
        <taxon>Methanoregula</taxon>
    </lineage>
</organism>
<proteinExistence type="inferred from homology"/>
<feature type="chain" id="PRO_0000355736" description="Large ribosomal subunit protein uL24">
    <location>
        <begin position="1"/>
        <end position="121"/>
    </location>
</feature>
<feature type="region of interest" description="Disordered" evidence="2">
    <location>
        <begin position="1"/>
        <end position="23"/>
    </location>
</feature>
<sequence length="121" mass="13592">MVRIESSQPRKQRKARYDAPSHMRSKFLNAPLSATLRETYEKKTIRVIKGDTVKVTRGDHVGEEGIVDGIDTRNVKIIVHGVSSTKVDGTEVPRPIDASKVEITKLKLDDKRRVEKLGGKE</sequence>
<keyword id="KW-1185">Reference proteome</keyword>
<keyword id="KW-0687">Ribonucleoprotein</keyword>
<keyword id="KW-0689">Ribosomal protein</keyword>
<keyword id="KW-0694">RNA-binding</keyword>
<keyword id="KW-0699">rRNA-binding</keyword>
<name>RL24_METB6</name>
<comment type="function">
    <text evidence="1">One of two assembly initiator proteins, it binds directly to the 5'-end of the 23S rRNA, where it nucleates assembly of the 50S subunit.</text>
</comment>
<comment type="function">
    <text evidence="1">Located at the polypeptide exit tunnel on the outside of the subunit.</text>
</comment>
<comment type="subunit">
    <text evidence="1">Part of the 50S ribosomal subunit.</text>
</comment>
<comment type="similarity">
    <text evidence="1">Belongs to the universal ribosomal protein uL24 family.</text>
</comment>
<dbReference type="EMBL" id="CP000780">
    <property type="protein sequence ID" value="ABS55061.1"/>
    <property type="molecule type" value="Genomic_DNA"/>
</dbReference>
<dbReference type="RefSeq" id="WP_012106082.1">
    <property type="nucleotide sequence ID" value="NC_009712.1"/>
</dbReference>
<dbReference type="SMR" id="A7I5Q0"/>
<dbReference type="STRING" id="456442.Mboo_0543"/>
<dbReference type="GeneID" id="5412237"/>
<dbReference type="KEGG" id="mbn:Mboo_0543"/>
<dbReference type="eggNOG" id="arCOG04094">
    <property type="taxonomic scope" value="Archaea"/>
</dbReference>
<dbReference type="HOGENOM" id="CLU_093240_2_1_2"/>
<dbReference type="OrthoDB" id="10899at2157"/>
<dbReference type="Proteomes" id="UP000002408">
    <property type="component" value="Chromosome"/>
</dbReference>
<dbReference type="GO" id="GO:0015934">
    <property type="term" value="C:large ribosomal subunit"/>
    <property type="evidence" value="ECO:0007669"/>
    <property type="project" value="InterPro"/>
</dbReference>
<dbReference type="GO" id="GO:0019843">
    <property type="term" value="F:rRNA binding"/>
    <property type="evidence" value="ECO:0007669"/>
    <property type="project" value="UniProtKB-UniRule"/>
</dbReference>
<dbReference type="GO" id="GO:0003735">
    <property type="term" value="F:structural constituent of ribosome"/>
    <property type="evidence" value="ECO:0007669"/>
    <property type="project" value="InterPro"/>
</dbReference>
<dbReference type="GO" id="GO:0006412">
    <property type="term" value="P:translation"/>
    <property type="evidence" value="ECO:0007669"/>
    <property type="project" value="UniProtKB-UniRule"/>
</dbReference>
<dbReference type="CDD" id="cd06089">
    <property type="entry name" value="KOW_RPL26"/>
    <property type="match status" value="1"/>
</dbReference>
<dbReference type="Gene3D" id="2.30.30.30">
    <property type="match status" value="1"/>
</dbReference>
<dbReference type="HAMAP" id="MF_01326_A">
    <property type="entry name" value="Ribosomal_uL24_A"/>
    <property type="match status" value="1"/>
</dbReference>
<dbReference type="InterPro" id="IPR005824">
    <property type="entry name" value="KOW"/>
</dbReference>
<dbReference type="InterPro" id="IPR014722">
    <property type="entry name" value="Rib_uL2_dom2"/>
</dbReference>
<dbReference type="InterPro" id="IPR005756">
    <property type="entry name" value="Ribosomal_uL24_euk/arc"/>
</dbReference>
<dbReference type="InterPro" id="IPR041988">
    <property type="entry name" value="Ribosomal_uL24_KOW"/>
</dbReference>
<dbReference type="InterPro" id="IPR008991">
    <property type="entry name" value="Translation_prot_SH3-like_sf"/>
</dbReference>
<dbReference type="NCBIfam" id="TIGR01080">
    <property type="entry name" value="rplX_A_E"/>
    <property type="match status" value="1"/>
</dbReference>
<dbReference type="PANTHER" id="PTHR11143">
    <property type="entry name" value="60S RIBOSOMAL PROTEIN L26 FAMILY MEMBER"/>
    <property type="match status" value="1"/>
</dbReference>
<dbReference type="Pfam" id="PF00467">
    <property type="entry name" value="KOW"/>
    <property type="match status" value="1"/>
</dbReference>
<dbReference type="Pfam" id="PF16906">
    <property type="entry name" value="Ribosomal_L26"/>
    <property type="match status" value="1"/>
</dbReference>
<dbReference type="SMART" id="SM00739">
    <property type="entry name" value="KOW"/>
    <property type="match status" value="1"/>
</dbReference>
<dbReference type="SUPFAM" id="SSF50104">
    <property type="entry name" value="Translation proteins SH3-like domain"/>
    <property type="match status" value="1"/>
</dbReference>
<protein>
    <recommendedName>
        <fullName evidence="1">Large ribosomal subunit protein uL24</fullName>
    </recommendedName>
    <alternativeName>
        <fullName evidence="3">50S ribosomal protein L24</fullName>
    </alternativeName>
</protein>
<accession>A7I5Q0</accession>
<gene>
    <name evidence="1" type="primary">rpl24</name>
    <name type="ordered locus">Mboo_0543</name>
</gene>
<evidence type="ECO:0000255" key="1">
    <source>
        <dbReference type="HAMAP-Rule" id="MF_01326"/>
    </source>
</evidence>
<evidence type="ECO:0000256" key="2">
    <source>
        <dbReference type="SAM" id="MobiDB-lite"/>
    </source>
</evidence>
<evidence type="ECO:0000305" key="3"/>
<reference key="1">
    <citation type="journal article" date="2015" name="Microbiology">
        <title>Genome of Methanoregula boonei 6A8 reveals adaptations to oligotrophic peatland environments.</title>
        <authorList>
            <person name="Braeuer S."/>
            <person name="Cadillo-Quiroz H."/>
            <person name="Kyrpides N."/>
            <person name="Woyke T."/>
            <person name="Goodwin L."/>
            <person name="Detter C."/>
            <person name="Podell S."/>
            <person name="Yavitt J.B."/>
            <person name="Zinder S.H."/>
        </authorList>
    </citation>
    <scope>NUCLEOTIDE SEQUENCE [LARGE SCALE GENOMIC DNA]</scope>
    <source>
        <strain>DSM 21154 / JCM 14090 / 6A8</strain>
    </source>
</reference>